<accession>Q76ZR2</accession>
<evidence type="ECO:0000250" key="1"/>
<evidence type="ECO:0000250" key="2">
    <source>
        <dbReference type="UniProtKB" id="P68319"/>
    </source>
</evidence>
<evidence type="ECO:0000305" key="3"/>
<reference key="1">
    <citation type="journal article" date="1998" name="Virology">
        <title>The complete genomic sequence of the modified vaccinia Ankara strain: comparison with other orthopoxviruses.</title>
        <authorList>
            <person name="Antoine G."/>
            <person name="Scheiflinger F."/>
            <person name="Dorner F."/>
            <person name="Falkner F.G."/>
        </authorList>
    </citation>
    <scope>NUCLEOTIDE SEQUENCE [LARGE SCALE GENOMIC DNA]</scope>
</reference>
<reference key="2">
    <citation type="submission" date="2004-04" db="EMBL/GenBank/DDBJ databases">
        <authorList>
            <person name="Esposito J.J."/>
            <person name="Frace M."/>
            <person name="Sammons S.A."/>
            <person name="Olsen-Rasmussen M.S."/>
            <person name="Osborne J."/>
            <person name="Khristova M."/>
            <person name="Wohlhueter R.M."/>
        </authorList>
    </citation>
    <scope>NUCLEOTIDE SEQUENCE [LARGE SCALE GENOMIC DNA]</scope>
    <source>
        <strain>Isolate Acambis 3000</strain>
    </source>
</reference>
<sequence length="224" mass="26289">MNLRLCSGCRHNGIVSEQGYEYCIFCESVFQKCTKVQKKSNFHVSNKLIHLRNVLRRLLSHQCSGEIISELLDIMEKNQISTDDVDANFVSSFLKANERINKKDYKLVFEIINQVKDEKLNLSTEKINEVVEIFKHLVFFCQENTPSKTINYSFFLDKIFDITSVTKNLKPQTVKNYTKNNSNQLVWENFLAHMRSKKRVTMVEDYGHEYVFVDERFSTCSLEV</sequence>
<protein>
    <recommendedName>
        <fullName>Viral late gene transcription factor 3</fullName>
        <shortName>VLTF-3</shortName>
    </recommendedName>
    <alternativeName>
        <fullName>Trans-activator protein A2</fullName>
    </alternativeName>
</protein>
<gene>
    <name type="primary">OPG127</name>
    <name type="synonym">VLTF3</name>
    <name type="ordered locus">MVA112L</name>
    <name type="ordered locus">ACAM3000_MVA_112</name>
</gene>
<name>VLTF3_VACCA</name>
<organism>
    <name type="scientific">Vaccinia virus (strain Ankara)</name>
    <name type="common">VACV</name>
    <dbReference type="NCBI Taxonomy" id="126794"/>
    <lineage>
        <taxon>Viruses</taxon>
        <taxon>Varidnaviria</taxon>
        <taxon>Bamfordvirae</taxon>
        <taxon>Nucleocytoviricota</taxon>
        <taxon>Pokkesviricetes</taxon>
        <taxon>Chitovirales</taxon>
        <taxon>Poxviridae</taxon>
        <taxon>Chordopoxvirinae</taxon>
        <taxon>Orthopoxvirus</taxon>
        <taxon>Vaccinia virus</taxon>
    </lineage>
</organism>
<dbReference type="EMBL" id="U94848">
    <property type="protein sequence ID" value="AAB96455.1"/>
    <property type="molecule type" value="Genomic_DNA"/>
</dbReference>
<dbReference type="EMBL" id="AY603355">
    <property type="protein sequence ID" value="AAT10510.1"/>
    <property type="molecule type" value="Genomic_DNA"/>
</dbReference>
<dbReference type="SMR" id="Q76ZR2"/>
<dbReference type="DNASU" id="3707518"/>
<dbReference type="KEGG" id="vg:3707518"/>
<dbReference type="Proteomes" id="UP000159908">
    <property type="component" value="Segment"/>
</dbReference>
<dbReference type="Proteomes" id="UP000172909">
    <property type="component" value="Segment"/>
</dbReference>
<dbReference type="GO" id="GO:0008270">
    <property type="term" value="F:zinc ion binding"/>
    <property type="evidence" value="ECO:0007669"/>
    <property type="project" value="UniProtKB-KW"/>
</dbReference>
<dbReference type="GO" id="GO:0046782">
    <property type="term" value="P:regulation of viral transcription"/>
    <property type="evidence" value="ECO:0007669"/>
    <property type="project" value="InterPro"/>
</dbReference>
<dbReference type="InterPro" id="IPR007031">
    <property type="entry name" value="Poxvirus_VLTF3"/>
</dbReference>
<dbReference type="InterPro" id="IPR014900">
    <property type="entry name" value="VLTF-3_Zn_ribbon"/>
</dbReference>
<dbReference type="Pfam" id="PF08792">
    <property type="entry name" value="A2L_zn_ribbon"/>
    <property type="match status" value="1"/>
</dbReference>
<dbReference type="Pfam" id="PF04947">
    <property type="entry name" value="Pox_VLTF3"/>
    <property type="match status" value="1"/>
</dbReference>
<organismHost>
    <name type="scientific">Homo sapiens</name>
    <name type="common">Human</name>
    <dbReference type="NCBI Taxonomy" id="9606"/>
</organismHost>
<proteinExistence type="evidence at transcript level"/>
<comment type="function">
    <text evidence="2">Acts with RNA polymerase to initiate transcription from late gene promoters.</text>
</comment>
<comment type="subunit">
    <text evidence="2">Interacts with the late transcription elongation factor VLTF-4/OPG110. Interacts with the late transcription factors VLTF-1/OPG093.</text>
</comment>
<comment type="developmental stage">
    <text>Intermediate stages of infection.</text>
</comment>
<comment type="similarity">
    <text evidence="3">Belongs to the orthopoxvirus VLTF-3/OPG127 family.</text>
</comment>
<keyword id="KW-0010">Activator</keyword>
<keyword id="KW-0426">Late protein</keyword>
<keyword id="KW-0479">Metal-binding</keyword>
<keyword id="KW-0804">Transcription</keyword>
<keyword id="KW-0805">Transcription regulation</keyword>
<keyword id="KW-0862">Zinc</keyword>
<keyword id="KW-0863">Zinc-finger</keyword>
<feature type="chain" id="PRO_0000099175" description="Viral late gene transcription factor 3">
    <location>
        <begin position="1"/>
        <end position="224"/>
    </location>
</feature>
<feature type="zinc finger region" evidence="1">
    <location>
        <begin position="6"/>
        <end position="26"/>
    </location>
</feature>